<name>PYRI_VIBC1</name>
<feature type="chain" id="PRO_1000000055" description="Aspartate carbamoyltransferase regulatory chain">
    <location>
        <begin position="1"/>
        <end position="153"/>
    </location>
</feature>
<feature type="binding site" evidence="1">
    <location>
        <position position="109"/>
    </location>
    <ligand>
        <name>Zn(2+)</name>
        <dbReference type="ChEBI" id="CHEBI:29105"/>
    </ligand>
</feature>
<feature type="binding site" evidence="1">
    <location>
        <position position="114"/>
    </location>
    <ligand>
        <name>Zn(2+)</name>
        <dbReference type="ChEBI" id="CHEBI:29105"/>
    </ligand>
</feature>
<feature type="binding site" evidence="1">
    <location>
        <position position="138"/>
    </location>
    <ligand>
        <name>Zn(2+)</name>
        <dbReference type="ChEBI" id="CHEBI:29105"/>
    </ligand>
</feature>
<feature type="binding site" evidence="1">
    <location>
        <position position="141"/>
    </location>
    <ligand>
        <name>Zn(2+)</name>
        <dbReference type="ChEBI" id="CHEBI:29105"/>
    </ligand>
</feature>
<keyword id="KW-0479">Metal-binding</keyword>
<keyword id="KW-0665">Pyrimidine biosynthesis</keyword>
<keyword id="KW-0862">Zinc</keyword>
<protein>
    <recommendedName>
        <fullName evidence="1">Aspartate carbamoyltransferase regulatory chain</fullName>
    </recommendedName>
</protein>
<sequence>MAKETQLQVEAIKNGTVIDHIPAQIGIKVLKLFDMHNSSQRVTIGLNLPSSALGHKDLLKIENVFINEEQASKLALYAPHATVNQIENYEVVKKLALELPEKVNNVFECPNSNCITHNEPVASSFQVFEKKEEIRLKCKYCEKVFAREIVTER</sequence>
<comment type="function">
    <text evidence="1">Involved in allosteric regulation of aspartate carbamoyltransferase.</text>
</comment>
<comment type="cofactor">
    <cofactor evidence="1">
        <name>Zn(2+)</name>
        <dbReference type="ChEBI" id="CHEBI:29105"/>
    </cofactor>
    <text evidence="1">Binds 1 zinc ion per subunit.</text>
</comment>
<comment type="subunit">
    <text evidence="1">Contains catalytic and regulatory chains.</text>
</comment>
<comment type="similarity">
    <text evidence="1">Belongs to the PyrI family.</text>
</comment>
<organism>
    <name type="scientific">Vibrio campbellii (strain ATCC BAA-1116)</name>
    <dbReference type="NCBI Taxonomy" id="2902295"/>
    <lineage>
        <taxon>Bacteria</taxon>
        <taxon>Pseudomonadati</taxon>
        <taxon>Pseudomonadota</taxon>
        <taxon>Gammaproteobacteria</taxon>
        <taxon>Vibrionales</taxon>
        <taxon>Vibrionaceae</taxon>
        <taxon>Vibrio</taxon>
    </lineage>
</organism>
<evidence type="ECO:0000255" key="1">
    <source>
        <dbReference type="HAMAP-Rule" id="MF_00002"/>
    </source>
</evidence>
<reference key="1">
    <citation type="submission" date="2007-08" db="EMBL/GenBank/DDBJ databases">
        <authorList>
            <consortium name="The Vibrio harveyi Genome Sequencing Project"/>
            <person name="Bassler B."/>
            <person name="Clifton S.W."/>
            <person name="Fulton L."/>
            <person name="Delehaunty K."/>
            <person name="Fronick C."/>
            <person name="Harrison M."/>
            <person name="Markivic C."/>
            <person name="Fulton R."/>
            <person name="Tin-Wollam A.-M."/>
            <person name="Shah N."/>
            <person name="Pepin K."/>
            <person name="Nash W."/>
            <person name="Thiruvilangam P."/>
            <person name="Bhonagiri V."/>
            <person name="Waters C."/>
            <person name="Tu K.C."/>
            <person name="Irgon J."/>
            <person name="Wilson R.K."/>
        </authorList>
    </citation>
    <scope>NUCLEOTIDE SEQUENCE [LARGE SCALE GENOMIC DNA]</scope>
    <source>
        <strain>ATCC BAA-1116 / BB120</strain>
    </source>
</reference>
<gene>
    <name evidence="1" type="primary">pyrI</name>
    <name type="ordered locus">VIBHAR_03648</name>
</gene>
<dbReference type="EMBL" id="CP000789">
    <property type="protein sequence ID" value="ABU72562.1"/>
    <property type="molecule type" value="Genomic_DNA"/>
</dbReference>
<dbReference type="RefSeq" id="WP_005432849.1">
    <property type="nucleotide sequence ID" value="NC_022269.1"/>
</dbReference>
<dbReference type="SMR" id="A7MSE1"/>
<dbReference type="KEGG" id="vha:VIBHAR_03648"/>
<dbReference type="PATRIC" id="fig|338187.25.peg.2588"/>
<dbReference type="Proteomes" id="UP000008152">
    <property type="component" value="Chromosome I"/>
</dbReference>
<dbReference type="GO" id="GO:0009347">
    <property type="term" value="C:aspartate carbamoyltransferase complex"/>
    <property type="evidence" value="ECO:0007669"/>
    <property type="project" value="InterPro"/>
</dbReference>
<dbReference type="GO" id="GO:0046872">
    <property type="term" value="F:metal ion binding"/>
    <property type="evidence" value="ECO:0007669"/>
    <property type="project" value="UniProtKB-KW"/>
</dbReference>
<dbReference type="GO" id="GO:0006207">
    <property type="term" value="P:'de novo' pyrimidine nucleobase biosynthetic process"/>
    <property type="evidence" value="ECO:0007669"/>
    <property type="project" value="InterPro"/>
</dbReference>
<dbReference type="GO" id="GO:0006221">
    <property type="term" value="P:pyrimidine nucleotide biosynthetic process"/>
    <property type="evidence" value="ECO:0007669"/>
    <property type="project" value="UniProtKB-UniRule"/>
</dbReference>
<dbReference type="Gene3D" id="2.30.30.20">
    <property type="entry name" value="Aspartate carbamoyltransferase regulatory subunit, C-terminal domain"/>
    <property type="match status" value="1"/>
</dbReference>
<dbReference type="Gene3D" id="3.30.70.140">
    <property type="entry name" value="Aspartate carbamoyltransferase regulatory subunit, N-terminal domain"/>
    <property type="match status" value="1"/>
</dbReference>
<dbReference type="HAMAP" id="MF_00002">
    <property type="entry name" value="Asp_carb_tr_reg"/>
    <property type="match status" value="1"/>
</dbReference>
<dbReference type="InterPro" id="IPR020545">
    <property type="entry name" value="Asp_carbamoyltransf_reg_N"/>
</dbReference>
<dbReference type="InterPro" id="IPR002801">
    <property type="entry name" value="Asp_carbamoylTrfase_reg"/>
</dbReference>
<dbReference type="InterPro" id="IPR020542">
    <property type="entry name" value="Asp_carbamoyltrfase_reg_C"/>
</dbReference>
<dbReference type="InterPro" id="IPR036792">
    <property type="entry name" value="Asp_carbatrfase_reg_C_sf"/>
</dbReference>
<dbReference type="InterPro" id="IPR036793">
    <property type="entry name" value="Asp_carbatrfase_reg_N_sf"/>
</dbReference>
<dbReference type="NCBIfam" id="TIGR00240">
    <property type="entry name" value="ATCase_reg"/>
    <property type="match status" value="1"/>
</dbReference>
<dbReference type="PANTHER" id="PTHR35805">
    <property type="entry name" value="ASPARTATE CARBAMOYLTRANSFERASE REGULATORY CHAIN"/>
    <property type="match status" value="1"/>
</dbReference>
<dbReference type="PANTHER" id="PTHR35805:SF1">
    <property type="entry name" value="ASPARTATE CARBAMOYLTRANSFERASE REGULATORY CHAIN"/>
    <property type="match status" value="1"/>
</dbReference>
<dbReference type="Pfam" id="PF01948">
    <property type="entry name" value="PyrI"/>
    <property type="match status" value="1"/>
</dbReference>
<dbReference type="Pfam" id="PF02748">
    <property type="entry name" value="PyrI_C"/>
    <property type="match status" value="1"/>
</dbReference>
<dbReference type="SUPFAM" id="SSF57825">
    <property type="entry name" value="Aspartate carbamoyltransferase, Regulatory-chain, C-terminal domain"/>
    <property type="match status" value="1"/>
</dbReference>
<dbReference type="SUPFAM" id="SSF54893">
    <property type="entry name" value="Aspartate carbamoyltransferase, Regulatory-chain, N-terminal domain"/>
    <property type="match status" value="1"/>
</dbReference>
<accession>A7MSE1</accession>
<proteinExistence type="inferred from homology"/>